<gene>
    <name type="ordered locus">At1g28640</name>
    <name type="ORF">F1K23.25</name>
</gene>
<proteinExistence type="inferred from homology"/>
<organism>
    <name type="scientific">Arabidopsis thaliana</name>
    <name type="common">Mouse-ear cress</name>
    <dbReference type="NCBI Taxonomy" id="3702"/>
    <lineage>
        <taxon>Eukaryota</taxon>
        <taxon>Viridiplantae</taxon>
        <taxon>Streptophyta</taxon>
        <taxon>Embryophyta</taxon>
        <taxon>Tracheophyta</taxon>
        <taxon>Spermatophyta</taxon>
        <taxon>Magnoliopsida</taxon>
        <taxon>eudicotyledons</taxon>
        <taxon>Gunneridae</taxon>
        <taxon>Pentapetalae</taxon>
        <taxon>rosids</taxon>
        <taxon>malvids</taxon>
        <taxon>Brassicales</taxon>
        <taxon>Brassicaceae</taxon>
        <taxon>Camelineae</taxon>
        <taxon>Arabidopsis</taxon>
    </lineage>
</organism>
<protein>
    <recommendedName>
        <fullName>GDSL esterase/lipase At1g28640</fullName>
        <ecNumber>3.1.1.-</ecNumber>
    </recommendedName>
    <alternativeName>
        <fullName>Extracellular lipase At1g28640</fullName>
    </alternativeName>
</protein>
<reference key="1">
    <citation type="journal article" date="2000" name="Nature">
        <title>Sequence and analysis of chromosome 1 of the plant Arabidopsis thaliana.</title>
        <authorList>
            <person name="Theologis A."/>
            <person name="Ecker J.R."/>
            <person name="Palm C.J."/>
            <person name="Federspiel N.A."/>
            <person name="Kaul S."/>
            <person name="White O."/>
            <person name="Alonso J."/>
            <person name="Altafi H."/>
            <person name="Araujo R."/>
            <person name="Bowman C.L."/>
            <person name="Brooks S.Y."/>
            <person name="Buehler E."/>
            <person name="Chan A."/>
            <person name="Chao Q."/>
            <person name="Chen H."/>
            <person name="Cheuk R.F."/>
            <person name="Chin C.W."/>
            <person name="Chung M.K."/>
            <person name="Conn L."/>
            <person name="Conway A.B."/>
            <person name="Conway A.R."/>
            <person name="Creasy T.H."/>
            <person name="Dewar K."/>
            <person name="Dunn P."/>
            <person name="Etgu P."/>
            <person name="Feldblyum T.V."/>
            <person name="Feng J.-D."/>
            <person name="Fong B."/>
            <person name="Fujii C.Y."/>
            <person name="Gill J.E."/>
            <person name="Goldsmith A.D."/>
            <person name="Haas B."/>
            <person name="Hansen N.F."/>
            <person name="Hughes B."/>
            <person name="Huizar L."/>
            <person name="Hunter J.L."/>
            <person name="Jenkins J."/>
            <person name="Johnson-Hopson C."/>
            <person name="Khan S."/>
            <person name="Khaykin E."/>
            <person name="Kim C.J."/>
            <person name="Koo H.L."/>
            <person name="Kremenetskaia I."/>
            <person name="Kurtz D.B."/>
            <person name="Kwan A."/>
            <person name="Lam B."/>
            <person name="Langin-Hooper S."/>
            <person name="Lee A."/>
            <person name="Lee J.M."/>
            <person name="Lenz C.A."/>
            <person name="Li J.H."/>
            <person name="Li Y.-P."/>
            <person name="Lin X."/>
            <person name="Liu S.X."/>
            <person name="Liu Z.A."/>
            <person name="Luros J.S."/>
            <person name="Maiti R."/>
            <person name="Marziali A."/>
            <person name="Militscher J."/>
            <person name="Miranda M."/>
            <person name="Nguyen M."/>
            <person name="Nierman W.C."/>
            <person name="Osborne B.I."/>
            <person name="Pai G."/>
            <person name="Peterson J."/>
            <person name="Pham P.K."/>
            <person name="Rizzo M."/>
            <person name="Rooney T."/>
            <person name="Rowley D."/>
            <person name="Sakano H."/>
            <person name="Salzberg S.L."/>
            <person name="Schwartz J.R."/>
            <person name="Shinn P."/>
            <person name="Southwick A.M."/>
            <person name="Sun H."/>
            <person name="Tallon L.J."/>
            <person name="Tambunga G."/>
            <person name="Toriumi M.J."/>
            <person name="Town C.D."/>
            <person name="Utterback T."/>
            <person name="Van Aken S."/>
            <person name="Vaysberg M."/>
            <person name="Vysotskaia V.S."/>
            <person name="Walker M."/>
            <person name="Wu D."/>
            <person name="Yu G."/>
            <person name="Fraser C.M."/>
            <person name="Venter J.C."/>
            <person name="Davis R.W."/>
        </authorList>
    </citation>
    <scope>NUCLEOTIDE SEQUENCE [LARGE SCALE GENOMIC DNA]</scope>
    <source>
        <strain>cv. Columbia</strain>
    </source>
</reference>
<reference key="2">
    <citation type="journal article" date="2017" name="Plant J.">
        <title>Araport11: a complete reannotation of the Arabidopsis thaliana reference genome.</title>
        <authorList>
            <person name="Cheng C.Y."/>
            <person name="Krishnakumar V."/>
            <person name="Chan A.P."/>
            <person name="Thibaud-Nissen F."/>
            <person name="Schobel S."/>
            <person name="Town C.D."/>
        </authorList>
    </citation>
    <scope>GENOME REANNOTATION</scope>
    <source>
        <strain>cv. Columbia</strain>
    </source>
</reference>
<reference key="3">
    <citation type="journal article" date="2004" name="Prog. Lipid Res.">
        <title>GDSL family of serine esterases/lipases.</title>
        <authorList>
            <person name="Akoh C.C."/>
            <person name="Lee G.-C."/>
            <person name="Liaw Y.-C."/>
            <person name="Huang T.-H."/>
            <person name="Shaw J.-F."/>
        </authorList>
    </citation>
    <scope>REVIEW</scope>
</reference>
<reference key="4">
    <citation type="journal article" date="2008" name="Pak. J. Biol. Sci.">
        <title>Sequence analysis of GDSL lipase gene family in Arabidopsis thaliana.</title>
        <authorList>
            <person name="Ling H."/>
        </authorList>
    </citation>
    <scope>GENE FAMILY</scope>
</reference>
<evidence type="ECO:0000250" key="1"/>
<evidence type="ECO:0000255" key="2"/>
<evidence type="ECO:0000305" key="3"/>
<sequence>MASSLEKLISSFLLVLYSTTIIVASSESRCRRFKSIISFGDSIADTGNYLHLSDVNHLPQSAFLPYGESFFHPPSGRYSDGRLIIDFIAEFLGLPYVPSYFGSQNVSFDQGINFAVYGATALDRVFLVGKGIESDFTNVSLSVQLNIFKQILPNLCTSSSRDCREMLGDSLILMGEIGVNDYNYPFFEGKSINEIKQLVPLVIKAISSAIVDLIDLGGKTFLVPGNFPLGCYPAYLTLFQTAAEEDHDPFTGCIPRLNEFGEYHNEQLKTELKRLQELYDHVNIIYADYYNSLFRLYQEPVKYGFKNRPLAACCGVGGQYNFTIGKECGHRGVSCCQNPSEYVNWDGYHLTEATHQKMAQVILNGTYASPAFDWSCSGSESVDKEYSFSS</sequence>
<comment type="subcellular location">
    <subcellularLocation>
        <location evidence="3">Secreted</location>
    </subcellularLocation>
</comment>
<comment type="similarity">
    <text evidence="3">Belongs to the 'GDSL' lipolytic enzyme family.</text>
</comment>
<comment type="sequence caution" evidence="3">
    <conflict type="erroneous gene model prediction">
        <sequence resource="EMBL-CDS" id="AAF24544"/>
    </conflict>
    <text>The predicted gene has been split into 4 genes: At1g28640, At1g28650, At1g28660 and At1g28670.</text>
</comment>
<comment type="sequence caution" evidence="3">
    <conflict type="erroneous gene model prediction">
        <sequence resource="EMBL-CDS" id="AEE31008"/>
    </conflict>
</comment>
<accession>P0C8Z7</accession>
<accession>F4HY89</accession>
<accession>Q9SHP9</accession>
<accession>Q9SHQ1</accession>
<dbReference type="EC" id="3.1.1.-"/>
<dbReference type="EMBL" id="AC007508">
    <property type="protein sequence ID" value="AAF24544.2"/>
    <property type="status" value="ALT_SEQ"/>
    <property type="molecule type" value="Genomic_DNA"/>
</dbReference>
<dbReference type="EMBL" id="CP002684">
    <property type="protein sequence ID" value="AEE31008.1"/>
    <property type="status" value="ALT_SEQ"/>
    <property type="molecule type" value="Genomic_DNA"/>
</dbReference>
<dbReference type="RefSeq" id="NP_174185.2">
    <property type="nucleotide sequence ID" value="NM_102631.3"/>
</dbReference>
<dbReference type="SMR" id="P0C8Z7"/>
<dbReference type="FunCoup" id="P0C8Z7">
    <property type="interactions" value="113"/>
</dbReference>
<dbReference type="GlyGen" id="P0C8Z7">
    <property type="glycosylation" value="4 sites"/>
</dbReference>
<dbReference type="PaxDb" id="3702-AT1G28640.1"/>
<dbReference type="ProteomicsDB" id="247115"/>
<dbReference type="GeneID" id="839764"/>
<dbReference type="KEGG" id="ath:AT1G28640"/>
<dbReference type="Araport" id="AT1G28640"/>
<dbReference type="TAIR" id="AT1G28640"/>
<dbReference type="eggNOG" id="ENOG502QSMM">
    <property type="taxonomic scope" value="Eukaryota"/>
</dbReference>
<dbReference type="HOGENOM" id="CLU_015101_2_1_1"/>
<dbReference type="InParanoid" id="P0C8Z7"/>
<dbReference type="OrthoDB" id="1600564at2759"/>
<dbReference type="PhylomeDB" id="P0C8Z7"/>
<dbReference type="BioCyc" id="ARA:AT1G28640-MONOMER"/>
<dbReference type="BRENDA" id="3.1.1.49">
    <property type="organism ID" value="399"/>
</dbReference>
<dbReference type="PRO" id="PR:P0C8Z7"/>
<dbReference type="Proteomes" id="UP000006548">
    <property type="component" value="Chromosome 1"/>
</dbReference>
<dbReference type="ExpressionAtlas" id="P0C8Z7">
    <property type="expression patterns" value="baseline and differential"/>
</dbReference>
<dbReference type="GO" id="GO:0005576">
    <property type="term" value="C:extracellular region"/>
    <property type="evidence" value="ECO:0007669"/>
    <property type="project" value="UniProtKB-SubCell"/>
</dbReference>
<dbReference type="GO" id="GO:0016788">
    <property type="term" value="F:hydrolase activity, acting on ester bonds"/>
    <property type="evidence" value="ECO:0007669"/>
    <property type="project" value="InterPro"/>
</dbReference>
<dbReference type="GO" id="GO:0016042">
    <property type="term" value="P:lipid catabolic process"/>
    <property type="evidence" value="ECO:0007669"/>
    <property type="project" value="UniProtKB-KW"/>
</dbReference>
<dbReference type="CDD" id="cd01837">
    <property type="entry name" value="SGNH_plant_lipase_like"/>
    <property type="match status" value="1"/>
</dbReference>
<dbReference type="Gene3D" id="3.40.50.1110">
    <property type="entry name" value="SGNH hydrolase"/>
    <property type="match status" value="1"/>
</dbReference>
<dbReference type="InterPro" id="IPR001087">
    <property type="entry name" value="GDSL"/>
</dbReference>
<dbReference type="InterPro" id="IPR036514">
    <property type="entry name" value="SGNH_hydro_sf"/>
</dbReference>
<dbReference type="InterPro" id="IPR035669">
    <property type="entry name" value="SGNH_plant_lipase-like"/>
</dbReference>
<dbReference type="PANTHER" id="PTHR22835:SF522">
    <property type="entry name" value="SINAPINE ESTERASE"/>
    <property type="match status" value="1"/>
</dbReference>
<dbReference type="PANTHER" id="PTHR22835">
    <property type="entry name" value="ZINC FINGER FYVE DOMAIN CONTAINING PROTEIN"/>
    <property type="match status" value="1"/>
</dbReference>
<dbReference type="Pfam" id="PF00657">
    <property type="entry name" value="Lipase_GDSL"/>
    <property type="match status" value="1"/>
</dbReference>
<dbReference type="SUPFAM" id="SSF52266">
    <property type="entry name" value="SGNH hydrolase"/>
    <property type="match status" value="1"/>
</dbReference>
<keyword id="KW-0325">Glycoprotein</keyword>
<keyword id="KW-0378">Hydrolase</keyword>
<keyword id="KW-0442">Lipid degradation</keyword>
<keyword id="KW-0443">Lipid metabolism</keyword>
<keyword id="KW-1185">Reference proteome</keyword>
<keyword id="KW-0964">Secreted</keyword>
<keyword id="KW-0732">Signal</keyword>
<name>GDL91_ARATH</name>
<feature type="signal peptide" evidence="2">
    <location>
        <begin position="1"/>
        <end position="26"/>
    </location>
</feature>
<feature type="chain" id="PRO_0000367431" description="GDSL esterase/lipase At1g28640">
    <location>
        <begin position="27"/>
        <end position="390"/>
    </location>
</feature>
<feature type="active site" description="Nucleophile" evidence="1">
    <location>
        <position position="42"/>
    </location>
</feature>
<feature type="active site" evidence="1">
    <location>
        <position position="346"/>
    </location>
</feature>
<feature type="active site" evidence="1">
    <location>
        <position position="349"/>
    </location>
</feature>
<feature type="glycosylation site" description="N-linked (GlcNAc...) asparagine" evidence="2">
    <location>
        <position position="105"/>
    </location>
</feature>
<feature type="glycosylation site" description="N-linked (GlcNAc...) asparagine" evidence="2">
    <location>
        <position position="138"/>
    </location>
</feature>
<feature type="glycosylation site" description="N-linked (GlcNAc...) asparagine" evidence="2">
    <location>
        <position position="321"/>
    </location>
</feature>
<feature type="glycosylation site" description="N-linked (GlcNAc...) asparagine" evidence="2">
    <location>
        <position position="364"/>
    </location>
</feature>